<dbReference type="EMBL" id="CP000255">
    <property type="protein sequence ID" value="ABD20505.1"/>
    <property type="molecule type" value="Genomic_DNA"/>
</dbReference>
<dbReference type="RefSeq" id="WP_000737976.1">
    <property type="nucleotide sequence ID" value="NZ_CP027476.1"/>
</dbReference>
<dbReference type="SMR" id="Q2FFR1"/>
<dbReference type="KEGG" id="saa:SAUSA300_1784"/>
<dbReference type="HOGENOM" id="CLU_116220_0_0_9"/>
<dbReference type="OMA" id="FFYPISE"/>
<dbReference type="Proteomes" id="UP000001939">
    <property type="component" value="Chromosome"/>
</dbReference>
<dbReference type="GO" id="GO:0016020">
    <property type="term" value="C:membrane"/>
    <property type="evidence" value="ECO:0007669"/>
    <property type="project" value="UniProtKB-SubCell"/>
</dbReference>
<dbReference type="Gene3D" id="3.30.70.100">
    <property type="match status" value="1"/>
</dbReference>
<dbReference type="InterPro" id="IPR007138">
    <property type="entry name" value="ABM_dom"/>
</dbReference>
<dbReference type="InterPro" id="IPR011008">
    <property type="entry name" value="Dimeric_a/b-barrel"/>
</dbReference>
<dbReference type="InterPro" id="IPR050404">
    <property type="entry name" value="Heme-degrading_MO"/>
</dbReference>
<dbReference type="PANTHER" id="PTHR34474">
    <property type="entry name" value="SIGNAL TRANSDUCTION PROTEIN TRAP"/>
    <property type="match status" value="1"/>
</dbReference>
<dbReference type="PANTHER" id="PTHR34474:SF2">
    <property type="entry name" value="SIGNAL TRANSDUCTION PROTEIN TRAP"/>
    <property type="match status" value="1"/>
</dbReference>
<dbReference type="SUPFAM" id="SSF54909">
    <property type="entry name" value="Dimeric alpha+beta barrel"/>
    <property type="match status" value="1"/>
</dbReference>
<dbReference type="PROSITE" id="PS51725">
    <property type="entry name" value="ABM"/>
    <property type="match status" value="1"/>
</dbReference>
<protein>
    <recommendedName>
        <fullName>Signal transduction protein TRAP</fullName>
    </recommendedName>
    <alternativeName>
        <fullName>Target of RNAIII-activating protein</fullName>
    </alternativeName>
</protein>
<feature type="chain" id="PRO_0000289344" description="Signal transduction protein TRAP">
    <location>
        <begin position="1"/>
        <end position="167"/>
    </location>
</feature>
<feature type="domain" description="ABM">
    <location>
        <begin position="67"/>
        <end position="158"/>
    </location>
</feature>
<feature type="modified residue" description="Phosphohistidine" evidence="1">
    <location>
        <position position="66"/>
    </location>
</feature>
<feature type="modified residue" description="Phosphohistidine" evidence="1">
    <location>
        <position position="79"/>
    </location>
</feature>
<feature type="modified residue" description="Phosphohistidine" evidence="1">
    <location>
        <position position="154"/>
    </location>
</feature>
<reference key="1">
    <citation type="journal article" date="2006" name="Lancet">
        <title>Complete genome sequence of USA300, an epidemic clone of community-acquired meticillin-resistant Staphylococcus aureus.</title>
        <authorList>
            <person name="Diep B.A."/>
            <person name="Gill S.R."/>
            <person name="Chang R.F."/>
            <person name="Phan T.H."/>
            <person name="Chen J.H."/>
            <person name="Davidson M.G."/>
            <person name="Lin F."/>
            <person name="Lin J."/>
            <person name="Carleton H.A."/>
            <person name="Mongodin E.F."/>
            <person name="Sensabaugh G.F."/>
            <person name="Perdreau-Remington F."/>
        </authorList>
    </citation>
    <scope>NUCLEOTIDE SEQUENCE [LARGE SCALE GENOMIC DNA]</scope>
    <source>
        <strain>USA300</strain>
    </source>
</reference>
<keyword id="KW-0472">Membrane</keyword>
<keyword id="KW-0597">Phosphoprotein</keyword>
<keyword id="KW-0843">Virulence</keyword>
<name>TRAP_STAA3</name>
<sequence>MKKLYTSYGTYGFLHQIKINNPTHQLFQFSASDTSVIFEETDGETVLKSPSIYEVIKEIGEFSEHHFYCAIFIPSTEDHAYQLEKKLISVDDNFRNFGGFKSYRLLRPAKGTTYKIYFGFADRHAYEDFKQSDAFNDHFSKDALSHYFGSSGQHSSYFERYLYPIKE</sequence>
<comment type="function">
    <text evidence="1">Signal transduction protein, which is a major regulator of staphylococcal pathogenesis. Phosphorylated TRAP leads to the activation of agr system and consequent RNAIII synthesis resulting in the expression of several virulence factors. Up-regulates the expression of most toxins and genes known to be necessary for biofilm formation (By similarity).</text>
</comment>
<comment type="subcellular location">
    <subcellularLocation>
        <location>Membrane</location>
    </subcellularLocation>
    <text evidence="1">Membrane-associated.</text>
</comment>
<comment type="PTM">
    <text evidence="1">Each of the three conserved histidine residues contributes to TRAP phosphorylation. Phosphorylation is essential for TRAP activity (By similarity).</text>
</comment>
<comment type="PTM">
    <text evidence="1">Phosphorylation of TRAP is activated by RAP and necessary for the induction of RNAIII gene expression but not for ongoing transcription. TRAP is dephosphorylated from the mid-exponential phase of growth, which is when agr is activated and AIP is produced. RIP acts by inhibiting TRAP phosphorylation (By similarity).</text>
</comment>
<comment type="similarity">
    <text evidence="2">Belongs to the TRAP family.</text>
</comment>
<evidence type="ECO:0000250" key="1"/>
<evidence type="ECO:0000305" key="2"/>
<proteinExistence type="inferred from homology"/>
<accession>Q2FFR1</accession>
<gene>
    <name type="primary">traP</name>
    <name type="ordered locus">SAUSA300_1784</name>
</gene>
<organism>
    <name type="scientific">Staphylococcus aureus (strain USA300)</name>
    <dbReference type="NCBI Taxonomy" id="367830"/>
    <lineage>
        <taxon>Bacteria</taxon>
        <taxon>Bacillati</taxon>
        <taxon>Bacillota</taxon>
        <taxon>Bacilli</taxon>
        <taxon>Bacillales</taxon>
        <taxon>Staphylococcaceae</taxon>
        <taxon>Staphylococcus</taxon>
    </lineage>
</organism>